<name>Y441_NANEQ</name>
<accession>Q74M72</accession>
<dbReference type="EMBL" id="AE017199">
    <property type="protein sequence ID" value="AAR39286.1"/>
    <property type="molecule type" value="Genomic_DNA"/>
</dbReference>
<dbReference type="SMR" id="Q74M72"/>
<dbReference type="STRING" id="228908.NEQ441"/>
<dbReference type="EnsemblBacteria" id="AAR39286">
    <property type="protein sequence ID" value="AAR39286"/>
    <property type="gene ID" value="NEQ441"/>
</dbReference>
<dbReference type="KEGG" id="neq:NEQ441"/>
<dbReference type="PATRIC" id="fig|228908.8.peg.454"/>
<dbReference type="HOGENOM" id="CLU_095686_1_1_2"/>
<dbReference type="BioCyc" id="NEQU228908:GJB6-468-MONOMER"/>
<dbReference type="Proteomes" id="UP000000578">
    <property type="component" value="Chromosome"/>
</dbReference>
<dbReference type="Gene3D" id="3.30.700.20">
    <property type="entry name" value="Hypothetical protein ph0010, domain 1"/>
    <property type="match status" value="1"/>
</dbReference>
<dbReference type="Gene3D" id="3.30.1490.150">
    <property type="entry name" value="Hypothetical protein ph0010, domain 2"/>
    <property type="match status" value="1"/>
</dbReference>
<dbReference type="HAMAP" id="MF_00645">
    <property type="entry name" value="AMMECR1"/>
    <property type="match status" value="1"/>
</dbReference>
<dbReference type="InterPro" id="IPR023473">
    <property type="entry name" value="AMMECR1"/>
</dbReference>
<dbReference type="InterPro" id="IPR036071">
    <property type="entry name" value="AMMECR1_dom_sf"/>
</dbReference>
<dbReference type="InterPro" id="IPR002733">
    <property type="entry name" value="AMMECR1_domain"/>
</dbReference>
<dbReference type="InterPro" id="IPR027485">
    <property type="entry name" value="AMMECR1_N"/>
</dbReference>
<dbReference type="InterPro" id="IPR027623">
    <property type="entry name" value="AmmeMemoSam_A"/>
</dbReference>
<dbReference type="InterPro" id="IPR023472">
    <property type="entry name" value="Uncharacterised_MJ0810"/>
</dbReference>
<dbReference type="NCBIfam" id="TIGR04335">
    <property type="entry name" value="AmmeMemoSam_A"/>
    <property type="match status" value="1"/>
</dbReference>
<dbReference type="NCBIfam" id="TIGR00296">
    <property type="entry name" value="TIGR00296 family protein"/>
    <property type="match status" value="1"/>
</dbReference>
<dbReference type="PANTHER" id="PTHR13016:SF0">
    <property type="entry name" value="AMME SYNDROME CANDIDATE GENE 1 PROTEIN"/>
    <property type="match status" value="1"/>
</dbReference>
<dbReference type="PANTHER" id="PTHR13016">
    <property type="entry name" value="AMMECR1 HOMOLOG"/>
    <property type="match status" value="1"/>
</dbReference>
<dbReference type="Pfam" id="PF01871">
    <property type="entry name" value="AMMECR1"/>
    <property type="match status" value="1"/>
</dbReference>
<dbReference type="SUPFAM" id="SSF143447">
    <property type="entry name" value="AMMECR1-like"/>
    <property type="match status" value="1"/>
</dbReference>
<dbReference type="PROSITE" id="PS51112">
    <property type="entry name" value="AMMECR1"/>
    <property type="match status" value="1"/>
</dbReference>
<proteinExistence type="inferred from homology"/>
<reference key="1">
    <citation type="journal article" date="2003" name="Proc. Natl. Acad. Sci. U.S.A.">
        <title>The genome of Nanoarchaeum equitans: insights into early archaeal evolution and derived parasitism.</title>
        <authorList>
            <person name="Waters E."/>
            <person name="Hohn M.J."/>
            <person name="Ahel I."/>
            <person name="Graham D.E."/>
            <person name="Adams M.D."/>
            <person name="Barnstead M."/>
            <person name="Beeson K.Y."/>
            <person name="Bibbs L."/>
            <person name="Bolanos R."/>
            <person name="Keller M."/>
            <person name="Kretz K."/>
            <person name="Lin X."/>
            <person name="Mathur E."/>
            <person name="Ni J."/>
            <person name="Podar M."/>
            <person name="Richardson T."/>
            <person name="Sutton G.G."/>
            <person name="Simon M."/>
            <person name="Soell D."/>
            <person name="Stetter K.O."/>
            <person name="Short J.M."/>
            <person name="Noorderwier M."/>
        </authorList>
    </citation>
    <scope>NUCLEOTIDE SEQUENCE [LARGE SCALE GENOMIC DNA]</scope>
    <source>
        <strain>Kin4-M</strain>
    </source>
</reference>
<evidence type="ECO:0000255" key="1">
    <source>
        <dbReference type="HAMAP-Rule" id="MF_00645"/>
    </source>
</evidence>
<keyword id="KW-1185">Reference proteome</keyword>
<gene>
    <name type="ordered locus">NEQ441</name>
</gene>
<organism>
    <name type="scientific">Nanoarchaeum equitans (strain Kin4-M)</name>
    <dbReference type="NCBI Taxonomy" id="228908"/>
    <lineage>
        <taxon>Archaea</taxon>
        <taxon>Nanobdellota</taxon>
        <taxon>Candidatus Nanoarchaeia</taxon>
        <taxon>Nanoarchaeales</taxon>
        <taxon>Nanoarchaeaceae</taxon>
        <taxon>Nanoarchaeum</taxon>
    </lineage>
</organism>
<sequence>MNLAKIARKIVEYALEGKDYEIPDEIKEKLNYKAGAFTTIKTLDNQLRGCMGIPYPIYPLWQSLKYSALMAAFEDPRFPPLQKEELDNVKFEVTVLTPPRKLIVNNPLEYLEKIKIGKHGIIIKRGPYSGLLLPQVPIEEGWDAKEFLSYGCLKAGLPMDCWLDPKTEVYVFEGQIFEED</sequence>
<protein>
    <recommendedName>
        <fullName evidence="1">Protein NEQ441</fullName>
    </recommendedName>
</protein>
<feature type="chain" id="PRO_0000142381" description="Protein NEQ441">
    <location>
        <begin position="1"/>
        <end position="180"/>
    </location>
</feature>
<feature type="domain" description="AMMECR1" evidence="1">
    <location>
        <begin position="1"/>
        <end position="180"/>
    </location>
</feature>